<sequence>MMDVSSWKEMEVALVSFDNADQIVEDPCYSNDLSPASQSRKGHPSCANLLSNWRILINSENANNETIFSRFSAEFSEHLVGERVGMEEGDQRVIINIAGLRFETRLKTLNQFPETLLGDPEKRMRYFDSMRNEYFFDRNRPSFDGILYYYQSGGKIRRPANVPIDVFADEITFYELGDEAMDQFREDEGFIKDPETLLPTNDFHRQFWLLFEYPESSSAARGVALVSVLVIVISIIIFCMETLPEFREEREYKSTQELSKNTTDTLLAHSTFTDPFFVIETACIIWFSFELFVRFIVCPSKTEFFKNIMNIIDIVSIIPYFVTLTTELIQQSELNGQQNMSLAILRIIRLVRVFRIFKLSRHSKGLQILGQTLKASMRELGLLIFFLFIGVILFSSAVYFAEVDEPQSHFSSIPDGFWWAVVTMTTVGYGDMCPTTLGGKIVGTLCAIAGVLTIALPVPVIVSNFNYFYHRETENEEKQILPGEVERILNSVVTGNDSMESLNKTNGGYPRDKAKK</sequence>
<protein>
    <recommendedName>
        <fullName>Potassium voltage-gated channel subfamily A member 10</fullName>
    </recommendedName>
</protein>
<proteinExistence type="evidence at transcript level"/>
<keyword id="KW-0325">Glycoprotein</keyword>
<keyword id="KW-0407">Ion channel</keyword>
<keyword id="KW-0406">Ion transport</keyword>
<keyword id="KW-0472">Membrane</keyword>
<keyword id="KW-0630">Potassium</keyword>
<keyword id="KW-0631">Potassium channel</keyword>
<keyword id="KW-0633">Potassium transport</keyword>
<keyword id="KW-1185">Reference proteome</keyword>
<keyword id="KW-0812">Transmembrane</keyword>
<keyword id="KW-1133">Transmembrane helix</keyword>
<keyword id="KW-0813">Transport</keyword>
<keyword id="KW-0851">Voltage-gated channel</keyword>
<organism>
    <name type="scientific">Gallus gallus</name>
    <name type="common">Chicken</name>
    <dbReference type="NCBI Taxonomy" id="9031"/>
    <lineage>
        <taxon>Eukaryota</taxon>
        <taxon>Metazoa</taxon>
        <taxon>Chordata</taxon>
        <taxon>Craniata</taxon>
        <taxon>Vertebrata</taxon>
        <taxon>Euteleostomi</taxon>
        <taxon>Archelosauria</taxon>
        <taxon>Archosauria</taxon>
        <taxon>Dinosauria</taxon>
        <taxon>Saurischia</taxon>
        <taxon>Theropoda</taxon>
        <taxon>Coelurosauria</taxon>
        <taxon>Aves</taxon>
        <taxon>Neognathae</taxon>
        <taxon>Galloanserae</taxon>
        <taxon>Galliformes</taxon>
        <taxon>Phasianidae</taxon>
        <taxon>Phasianinae</taxon>
        <taxon>Gallus</taxon>
    </lineage>
</organism>
<dbReference type="EMBL" id="AY329362">
    <property type="protein sequence ID" value="AAP94024.1"/>
    <property type="molecule type" value="mRNA"/>
</dbReference>
<dbReference type="RefSeq" id="NP_001383206.1">
    <property type="nucleotide sequence ID" value="NM_001396277.1"/>
</dbReference>
<dbReference type="RefSeq" id="NP_989793.1">
    <property type="nucleotide sequence ID" value="NM_204462.2"/>
</dbReference>
<dbReference type="SMR" id="Q7T199"/>
<dbReference type="STRING" id="9031.ENSGALP00000000597"/>
<dbReference type="GlyCosmos" id="Q7T199">
    <property type="glycosylation" value="3 sites, No reported glycans"/>
</dbReference>
<dbReference type="GlyGen" id="Q7T199">
    <property type="glycosylation" value="3 sites"/>
</dbReference>
<dbReference type="PaxDb" id="9031-ENSGALP00000000597"/>
<dbReference type="Ensembl" id="ENSGALT00010059878.1">
    <property type="protein sequence ID" value="ENSGALP00010036638.1"/>
    <property type="gene ID" value="ENSGALG00010024550.1"/>
</dbReference>
<dbReference type="Ensembl" id="ENSGALT00010059886.1">
    <property type="protein sequence ID" value="ENSGALP00010036646.1"/>
    <property type="gene ID" value="ENSGALG00010024550.1"/>
</dbReference>
<dbReference type="Ensembl" id="ENSGALT00010059888.1">
    <property type="protein sequence ID" value="ENSGALP00010036648.1"/>
    <property type="gene ID" value="ENSGALG00010024550.1"/>
</dbReference>
<dbReference type="Ensembl" id="ENSGALT00010059891.1">
    <property type="protein sequence ID" value="ENSGALP00010036651.1"/>
    <property type="gene ID" value="ENSGALG00010024550.1"/>
</dbReference>
<dbReference type="Ensembl" id="ENSGALT00010059893.1">
    <property type="protein sequence ID" value="ENSGALP00010036653.1"/>
    <property type="gene ID" value="ENSGALG00010024550.1"/>
</dbReference>
<dbReference type="Ensembl" id="ENSGALT00010059895.1">
    <property type="protein sequence ID" value="ENSGALP00010036655.1"/>
    <property type="gene ID" value="ENSGALG00010024550.1"/>
</dbReference>
<dbReference type="Ensembl" id="ENSGALT00010059896.1">
    <property type="protein sequence ID" value="ENSGALP00010036656.1"/>
    <property type="gene ID" value="ENSGALG00010024550.1"/>
</dbReference>
<dbReference type="Ensembl" id="ENSGALT00010059898.1">
    <property type="protein sequence ID" value="ENSGALP00010036658.1"/>
    <property type="gene ID" value="ENSGALG00010024550.1"/>
</dbReference>
<dbReference type="Ensembl" id="ENSGALT00010059901.1">
    <property type="protein sequence ID" value="ENSGALP00010036661.1"/>
    <property type="gene ID" value="ENSGALG00010024550.1"/>
</dbReference>
<dbReference type="Ensembl" id="ENSGALT00010059904.1">
    <property type="protein sequence ID" value="ENSGALP00010036664.1"/>
    <property type="gene ID" value="ENSGALG00010024550.1"/>
</dbReference>
<dbReference type="GeneID" id="395116"/>
<dbReference type="KEGG" id="gga:395116"/>
<dbReference type="CTD" id="3744"/>
<dbReference type="VEuPathDB" id="HostDB:geneid_395116"/>
<dbReference type="eggNOG" id="KOG1545">
    <property type="taxonomic scope" value="Eukaryota"/>
</dbReference>
<dbReference type="GeneTree" id="ENSGT00940000159534"/>
<dbReference type="HOGENOM" id="CLU_011722_4_0_1"/>
<dbReference type="InParanoid" id="Q7T199"/>
<dbReference type="OMA" id="NWRILIS"/>
<dbReference type="OrthoDB" id="415460at2759"/>
<dbReference type="PhylomeDB" id="Q7T199"/>
<dbReference type="TreeFam" id="TF313103"/>
<dbReference type="Reactome" id="R-GGA-1296072">
    <property type="pathway name" value="Voltage gated Potassium channels"/>
</dbReference>
<dbReference type="PRO" id="PR:Q7T199"/>
<dbReference type="Proteomes" id="UP000000539">
    <property type="component" value="Chromosome 26"/>
</dbReference>
<dbReference type="Bgee" id="ENSGALG00000000441">
    <property type="expression patterns" value="Expressed in cerebellum"/>
</dbReference>
<dbReference type="GO" id="GO:0016020">
    <property type="term" value="C:membrane"/>
    <property type="evidence" value="ECO:0000318"/>
    <property type="project" value="GO_Central"/>
</dbReference>
<dbReference type="GO" id="GO:0008076">
    <property type="term" value="C:voltage-gated potassium channel complex"/>
    <property type="evidence" value="ECO:0000318"/>
    <property type="project" value="GO_Central"/>
</dbReference>
<dbReference type="GO" id="GO:0005251">
    <property type="term" value="F:delayed rectifier potassium channel activity"/>
    <property type="evidence" value="ECO:0000318"/>
    <property type="project" value="GO_Central"/>
</dbReference>
<dbReference type="GO" id="GO:0001508">
    <property type="term" value="P:action potential"/>
    <property type="evidence" value="ECO:0000318"/>
    <property type="project" value="GO_Central"/>
</dbReference>
<dbReference type="GO" id="GO:0071805">
    <property type="term" value="P:potassium ion transmembrane transport"/>
    <property type="evidence" value="ECO:0000318"/>
    <property type="project" value="GO_Central"/>
</dbReference>
<dbReference type="GO" id="GO:0051260">
    <property type="term" value="P:protein homooligomerization"/>
    <property type="evidence" value="ECO:0007669"/>
    <property type="project" value="InterPro"/>
</dbReference>
<dbReference type="FunFam" id="1.10.287.70:FF:000002">
    <property type="entry name" value="Potassium voltage-gated channel subfamily a member"/>
    <property type="match status" value="1"/>
</dbReference>
<dbReference type="FunFam" id="3.30.710.10:FF:000012">
    <property type="entry name" value="Potassium voltage-gated channel subfamily A member 10"/>
    <property type="match status" value="1"/>
</dbReference>
<dbReference type="FunFam" id="1.20.120.350:FF:000033">
    <property type="entry name" value="potassium voltage-gated channel subfamily A member 10"/>
    <property type="match status" value="1"/>
</dbReference>
<dbReference type="Gene3D" id="1.10.287.70">
    <property type="match status" value="1"/>
</dbReference>
<dbReference type="Gene3D" id="3.30.710.10">
    <property type="entry name" value="Potassium Channel Kv1.1, Chain A"/>
    <property type="match status" value="1"/>
</dbReference>
<dbReference type="Gene3D" id="1.20.120.350">
    <property type="entry name" value="Voltage-gated potassium channels. Chain C"/>
    <property type="match status" value="1"/>
</dbReference>
<dbReference type="InterPro" id="IPR000210">
    <property type="entry name" value="BTB/POZ_dom"/>
</dbReference>
<dbReference type="InterPro" id="IPR005821">
    <property type="entry name" value="Ion_trans_dom"/>
</dbReference>
<dbReference type="InterPro" id="IPR003968">
    <property type="entry name" value="K_chnl_volt-dep_Kv"/>
</dbReference>
<dbReference type="InterPro" id="IPR003972">
    <property type="entry name" value="K_chnl_volt-dep_Kv1"/>
</dbReference>
<dbReference type="InterPro" id="IPR011333">
    <property type="entry name" value="SKP1/BTB/POZ_sf"/>
</dbReference>
<dbReference type="InterPro" id="IPR003131">
    <property type="entry name" value="T1-type_BTB"/>
</dbReference>
<dbReference type="InterPro" id="IPR028325">
    <property type="entry name" value="VG_K_chnl"/>
</dbReference>
<dbReference type="InterPro" id="IPR027359">
    <property type="entry name" value="Volt_channel_dom_sf"/>
</dbReference>
<dbReference type="PANTHER" id="PTHR11537:SF44">
    <property type="entry name" value="POTASSIUM VOLTAGE-GATED CHANNEL SUBFAMILY A MEMBER 10"/>
    <property type="match status" value="1"/>
</dbReference>
<dbReference type="PANTHER" id="PTHR11537">
    <property type="entry name" value="VOLTAGE-GATED POTASSIUM CHANNEL"/>
    <property type="match status" value="1"/>
</dbReference>
<dbReference type="Pfam" id="PF02214">
    <property type="entry name" value="BTB_2"/>
    <property type="match status" value="1"/>
</dbReference>
<dbReference type="Pfam" id="PF00520">
    <property type="entry name" value="Ion_trans"/>
    <property type="match status" value="1"/>
</dbReference>
<dbReference type="PRINTS" id="PR00169">
    <property type="entry name" value="KCHANNEL"/>
</dbReference>
<dbReference type="PRINTS" id="PR01491">
    <property type="entry name" value="KVCHANNEL"/>
</dbReference>
<dbReference type="PRINTS" id="PR01496">
    <property type="entry name" value="SHAKERCHANEL"/>
</dbReference>
<dbReference type="SMART" id="SM00225">
    <property type="entry name" value="BTB"/>
    <property type="match status" value="1"/>
</dbReference>
<dbReference type="SUPFAM" id="SSF54695">
    <property type="entry name" value="POZ domain"/>
    <property type="match status" value="1"/>
</dbReference>
<dbReference type="SUPFAM" id="SSF81324">
    <property type="entry name" value="Voltage-gated potassium channels"/>
    <property type="match status" value="1"/>
</dbReference>
<evidence type="ECO:0000250" key="1"/>
<evidence type="ECO:0000250" key="2">
    <source>
        <dbReference type="UniProtKB" id="P63142"/>
    </source>
</evidence>
<evidence type="ECO:0000250" key="3">
    <source>
        <dbReference type="UniProtKB" id="Q16322"/>
    </source>
</evidence>
<evidence type="ECO:0000255" key="4"/>
<evidence type="ECO:0000269" key="5">
    <source>
    </source>
</evidence>
<evidence type="ECO:0000305" key="6"/>
<gene>
    <name type="primary">KCNA10</name>
</gene>
<comment type="function">
    <text evidence="3">Voltage-gated potassium ion channel that mediates K(+) permeability of excitable membranes. When opened in response to the voltage difference across the membrane, KCNA10 channel selectively allows the flow of potassium ions across the membrane down their electrochemical gradient (By similarity).</text>
</comment>
<comment type="catalytic activity">
    <reaction evidence="3">
        <text>K(+)(in) = K(+)(out)</text>
        <dbReference type="Rhea" id="RHEA:29463"/>
        <dbReference type="ChEBI" id="CHEBI:29103"/>
    </reaction>
</comment>
<comment type="activity regulation">
    <text evidence="3">The channel activity is up-regulated by cAMP.</text>
</comment>
<comment type="subunit">
    <text evidence="3">Homotetramer.</text>
</comment>
<comment type="subcellular location">
    <subcellularLocation>
        <location evidence="4">Membrane</location>
        <topology evidence="4">Multi-pass membrane protein</topology>
    </subcellularLocation>
</comment>
<comment type="tissue specificity">
    <text evidence="5">Detected in brain, cochlear sensory epithelium, cochlear ganglion, tegumentum vasculosum. Detected at low levels in cochlear lagena.</text>
</comment>
<comment type="developmental stage">
    <text evidence="5">First detected at very low levels at embryonic day 6. Detected at embryonic day 9 and 14, and 3 days after hatching.</text>
</comment>
<comment type="domain">
    <text evidence="1">The N-terminus may be important in determining the rate of inactivation of the channel while the tail may play a role in modulation of channel activity and/or targeting of the channel to specific subcellular compartments.</text>
</comment>
<comment type="domain">
    <text evidence="2">The segment S4 is probably the voltage-sensor and is characterized by a series of positively charged amino acids at every third position.</text>
</comment>
<comment type="similarity">
    <text evidence="6">Belongs to the potassium channel family. A (Shaker) (TC 1.A.1.2) subfamily. Kv1.8/KCNA10 sub-subfamily.</text>
</comment>
<reference key="1">
    <citation type="journal article" date="2004" name="Brain Res. Mol. Brain Res.">
        <title>Cloning and developmental expression of Shaker potassium channels in the cochlea of the chicken.</title>
        <authorList>
            <person name="Duzhyy D.E."/>
            <person name="Sakai Y."/>
            <person name="Sokolowski B.H."/>
        </authorList>
    </citation>
    <scope>NUCLEOTIDE SEQUENCE [MRNA]</scope>
    <scope>DEVELOPMENTAL STAGE</scope>
    <scope>TISSUE SPECIFICITY</scope>
    <source>
        <tissue>Cochlear duct</tissue>
    </source>
</reference>
<accession>Q7T199</accession>
<name>KCA10_CHICK</name>
<feature type="chain" id="PRO_0000308276" description="Potassium voltage-gated channel subfamily A member 10">
    <location>
        <begin position="1"/>
        <end position="516"/>
    </location>
</feature>
<feature type="transmembrane region" description="Helical; Name=Segment S1" evidence="4">
    <location>
        <begin position="223"/>
        <end position="244"/>
    </location>
</feature>
<feature type="transmembrane region" description="Helical; Name=Segment S2" evidence="4">
    <location>
        <begin position="276"/>
        <end position="296"/>
    </location>
</feature>
<feature type="transmembrane region" description="Helical; Name=Segment S3" evidence="4">
    <location>
        <begin position="308"/>
        <end position="328"/>
    </location>
</feature>
<feature type="transmembrane region" description="Helical; Voltage-sensor; Name=Segment S4" evidence="4">
    <location>
        <begin position="344"/>
        <end position="363"/>
    </location>
</feature>
<feature type="transmembrane region" description="Helical; Name=Segment S5" evidence="4">
    <location>
        <begin position="380"/>
        <end position="400"/>
    </location>
</feature>
<feature type="transmembrane region" description="Helical; Name=Segment S6" evidence="4">
    <location>
        <begin position="441"/>
        <end position="461"/>
    </location>
</feature>
<feature type="short sequence motif" description="Selectivity filter" evidence="1">
    <location>
        <begin position="426"/>
        <end position="431"/>
    </location>
</feature>
<feature type="glycosylation site" description="N-linked (GlcNAc...) asparagine" evidence="4">
    <location>
        <position position="261"/>
    </location>
</feature>
<feature type="glycosylation site" description="N-linked (GlcNAc...) asparagine" evidence="4">
    <location>
        <position position="339"/>
    </location>
</feature>
<feature type="glycosylation site" description="N-linked (GlcNAc...) asparagine" evidence="4">
    <location>
        <position position="503"/>
    </location>
</feature>